<reference key="1">
    <citation type="submission" date="2007-09" db="EMBL/GenBank/DDBJ databases">
        <title>Complete genome sequence of Rickettsia akari.</title>
        <authorList>
            <person name="Madan A."/>
            <person name="Fahey J."/>
            <person name="Helton E."/>
            <person name="Ketteman M."/>
            <person name="Madan A."/>
            <person name="Rodrigues S."/>
            <person name="Sanchez A."/>
            <person name="Whiting M."/>
            <person name="Dasch G."/>
            <person name="Eremeeva M."/>
        </authorList>
    </citation>
    <scope>NUCLEOTIDE SEQUENCE [LARGE SCALE GENOMIC DNA]</scope>
    <source>
        <strain>Hartford</strain>
    </source>
</reference>
<comment type="function">
    <text evidence="1">Cleaves peptides in various proteins in a process that requires ATP hydrolysis. Has a chymotrypsin-like activity. Plays a major role in the degradation of misfolded proteins.</text>
</comment>
<comment type="catalytic activity">
    <reaction evidence="1">
        <text>Hydrolysis of proteins to small peptides in the presence of ATP and magnesium. alpha-casein is the usual test substrate. In the absence of ATP, only oligopeptides shorter than five residues are hydrolyzed (such as succinyl-Leu-Tyr-|-NHMec, and Leu-Tyr-Leu-|-Tyr-Trp, in which cleavage of the -Tyr-|-Leu- and -Tyr-|-Trp bonds also occurs).</text>
        <dbReference type="EC" id="3.4.21.92"/>
    </reaction>
</comment>
<comment type="subunit">
    <text evidence="1">Fourteen ClpP subunits assemble into 2 heptameric rings which stack back to back to give a disk-like structure with a central cavity, resembling the structure of eukaryotic proteasomes.</text>
</comment>
<comment type="subcellular location">
    <subcellularLocation>
        <location evidence="1">Cytoplasm</location>
    </subcellularLocation>
</comment>
<comment type="similarity">
    <text evidence="1">Belongs to the peptidase S14 family.</text>
</comment>
<evidence type="ECO:0000255" key="1">
    <source>
        <dbReference type="HAMAP-Rule" id="MF_00444"/>
    </source>
</evidence>
<protein>
    <recommendedName>
        <fullName evidence="1">ATP-dependent Clp protease proteolytic subunit</fullName>
        <ecNumber evidence="1">3.4.21.92</ecNumber>
    </recommendedName>
    <alternativeName>
        <fullName evidence="1">Endopeptidase Clp</fullName>
    </alternativeName>
</protein>
<gene>
    <name evidence="1" type="primary">clpP</name>
    <name type="ordered locus">A1C_04235</name>
</gene>
<dbReference type="EC" id="3.4.21.92" evidence="1"/>
<dbReference type="EMBL" id="CP000847">
    <property type="protein sequence ID" value="ABV75119.1"/>
    <property type="molecule type" value="Genomic_DNA"/>
</dbReference>
<dbReference type="RefSeq" id="WP_012149749.1">
    <property type="nucleotide sequence ID" value="NC_009881.1"/>
</dbReference>
<dbReference type="SMR" id="A8GNZ4"/>
<dbReference type="STRING" id="293614.A1C_04235"/>
<dbReference type="MEROPS" id="S14.001"/>
<dbReference type="KEGG" id="rak:A1C_04235"/>
<dbReference type="eggNOG" id="COG0740">
    <property type="taxonomic scope" value="Bacteria"/>
</dbReference>
<dbReference type="HOGENOM" id="CLU_058707_3_3_5"/>
<dbReference type="Proteomes" id="UP000006830">
    <property type="component" value="Chromosome"/>
</dbReference>
<dbReference type="GO" id="GO:0005737">
    <property type="term" value="C:cytoplasm"/>
    <property type="evidence" value="ECO:0007669"/>
    <property type="project" value="UniProtKB-SubCell"/>
</dbReference>
<dbReference type="GO" id="GO:0009368">
    <property type="term" value="C:endopeptidase Clp complex"/>
    <property type="evidence" value="ECO:0007669"/>
    <property type="project" value="TreeGrafter"/>
</dbReference>
<dbReference type="GO" id="GO:0004176">
    <property type="term" value="F:ATP-dependent peptidase activity"/>
    <property type="evidence" value="ECO:0007669"/>
    <property type="project" value="InterPro"/>
</dbReference>
<dbReference type="GO" id="GO:0051117">
    <property type="term" value="F:ATPase binding"/>
    <property type="evidence" value="ECO:0007669"/>
    <property type="project" value="TreeGrafter"/>
</dbReference>
<dbReference type="GO" id="GO:0004252">
    <property type="term" value="F:serine-type endopeptidase activity"/>
    <property type="evidence" value="ECO:0007669"/>
    <property type="project" value="UniProtKB-UniRule"/>
</dbReference>
<dbReference type="GO" id="GO:0006515">
    <property type="term" value="P:protein quality control for misfolded or incompletely synthesized proteins"/>
    <property type="evidence" value="ECO:0007669"/>
    <property type="project" value="TreeGrafter"/>
</dbReference>
<dbReference type="CDD" id="cd07017">
    <property type="entry name" value="S14_ClpP_2"/>
    <property type="match status" value="1"/>
</dbReference>
<dbReference type="FunFam" id="3.90.226.10:FF:000001">
    <property type="entry name" value="ATP-dependent Clp protease proteolytic subunit"/>
    <property type="match status" value="1"/>
</dbReference>
<dbReference type="Gene3D" id="3.90.226.10">
    <property type="entry name" value="2-enoyl-CoA Hydratase, Chain A, domain 1"/>
    <property type="match status" value="1"/>
</dbReference>
<dbReference type="HAMAP" id="MF_00444">
    <property type="entry name" value="ClpP"/>
    <property type="match status" value="1"/>
</dbReference>
<dbReference type="InterPro" id="IPR001907">
    <property type="entry name" value="ClpP"/>
</dbReference>
<dbReference type="InterPro" id="IPR029045">
    <property type="entry name" value="ClpP/crotonase-like_dom_sf"/>
</dbReference>
<dbReference type="InterPro" id="IPR023562">
    <property type="entry name" value="ClpP/TepA"/>
</dbReference>
<dbReference type="InterPro" id="IPR033135">
    <property type="entry name" value="ClpP_His_AS"/>
</dbReference>
<dbReference type="InterPro" id="IPR018215">
    <property type="entry name" value="ClpP_Ser_AS"/>
</dbReference>
<dbReference type="NCBIfam" id="TIGR00493">
    <property type="entry name" value="clpP"/>
    <property type="match status" value="1"/>
</dbReference>
<dbReference type="NCBIfam" id="NF001368">
    <property type="entry name" value="PRK00277.1"/>
    <property type="match status" value="1"/>
</dbReference>
<dbReference type="NCBIfam" id="NF009205">
    <property type="entry name" value="PRK12553.1"/>
    <property type="match status" value="1"/>
</dbReference>
<dbReference type="PANTHER" id="PTHR10381">
    <property type="entry name" value="ATP-DEPENDENT CLP PROTEASE PROTEOLYTIC SUBUNIT"/>
    <property type="match status" value="1"/>
</dbReference>
<dbReference type="PANTHER" id="PTHR10381:SF70">
    <property type="entry name" value="ATP-DEPENDENT CLP PROTEASE PROTEOLYTIC SUBUNIT"/>
    <property type="match status" value="1"/>
</dbReference>
<dbReference type="Pfam" id="PF00574">
    <property type="entry name" value="CLP_protease"/>
    <property type="match status" value="1"/>
</dbReference>
<dbReference type="PRINTS" id="PR00127">
    <property type="entry name" value="CLPPROTEASEP"/>
</dbReference>
<dbReference type="SUPFAM" id="SSF52096">
    <property type="entry name" value="ClpP/crotonase"/>
    <property type="match status" value="1"/>
</dbReference>
<dbReference type="PROSITE" id="PS00382">
    <property type="entry name" value="CLP_PROTEASE_HIS"/>
    <property type="match status" value="1"/>
</dbReference>
<dbReference type="PROSITE" id="PS00381">
    <property type="entry name" value="CLP_PROTEASE_SER"/>
    <property type="match status" value="1"/>
</dbReference>
<organism>
    <name type="scientific">Rickettsia akari (strain Hartford)</name>
    <dbReference type="NCBI Taxonomy" id="293614"/>
    <lineage>
        <taxon>Bacteria</taxon>
        <taxon>Pseudomonadati</taxon>
        <taxon>Pseudomonadota</taxon>
        <taxon>Alphaproteobacteria</taxon>
        <taxon>Rickettsiales</taxon>
        <taxon>Rickettsiaceae</taxon>
        <taxon>Rickettsieae</taxon>
        <taxon>Rickettsia</taxon>
        <taxon>spotted fever group</taxon>
    </lineage>
</organism>
<accession>A8GNZ4</accession>
<proteinExistence type="inferred from homology"/>
<feature type="chain" id="PRO_1000026121" description="ATP-dependent Clp protease proteolytic subunit">
    <location>
        <begin position="1"/>
        <end position="201"/>
    </location>
</feature>
<feature type="active site" description="Nucleophile" evidence="1">
    <location>
        <position position="98"/>
    </location>
</feature>
<feature type="active site" evidence="1">
    <location>
        <position position="123"/>
    </location>
</feature>
<keyword id="KW-0963">Cytoplasm</keyword>
<keyword id="KW-0378">Hydrolase</keyword>
<keyword id="KW-0645">Protease</keyword>
<keyword id="KW-0720">Serine protease</keyword>
<sequence length="201" mass="22597">MSYVPIVIEQTSRGERAYDIYSRLLKERIIFVCSTVEDHMANLIVAQLLFLEAENPKKDVYMYINSPGGVVTAGLAIYDTMQYIKPKVATLCIGQACSMGSLLLCGGTQGMRYSLPHSRIMIHQPSGGYKGQATDIEIHAQETLKIKRLLNELYSKHTGQELKHIEKSMERDNFMSPEEAKKFGIIDNIISSRDVMTMSAK</sequence>
<name>CLPP_RICAH</name>